<comment type="function">
    <text evidence="1">Catalyzes the oxidation of either pyridoxine 5'-phosphate (PNP) or pyridoxamine 5'-phosphate (PMP) into pyridoxal 5'-phosphate (PLP).</text>
</comment>
<comment type="catalytic activity">
    <reaction evidence="1">
        <text>pyridoxamine 5'-phosphate + O2 + H2O = pyridoxal 5'-phosphate + H2O2 + NH4(+)</text>
        <dbReference type="Rhea" id="RHEA:15817"/>
        <dbReference type="ChEBI" id="CHEBI:15377"/>
        <dbReference type="ChEBI" id="CHEBI:15379"/>
        <dbReference type="ChEBI" id="CHEBI:16240"/>
        <dbReference type="ChEBI" id="CHEBI:28938"/>
        <dbReference type="ChEBI" id="CHEBI:58451"/>
        <dbReference type="ChEBI" id="CHEBI:597326"/>
        <dbReference type="EC" id="1.4.3.5"/>
    </reaction>
</comment>
<comment type="catalytic activity">
    <reaction evidence="1">
        <text>pyridoxine 5'-phosphate + O2 = pyridoxal 5'-phosphate + H2O2</text>
        <dbReference type="Rhea" id="RHEA:15149"/>
        <dbReference type="ChEBI" id="CHEBI:15379"/>
        <dbReference type="ChEBI" id="CHEBI:16240"/>
        <dbReference type="ChEBI" id="CHEBI:58589"/>
        <dbReference type="ChEBI" id="CHEBI:597326"/>
        <dbReference type="EC" id="1.4.3.5"/>
    </reaction>
</comment>
<comment type="cofactor">
    <cofactor evidence="1">
        <name>FMN</name>
        <dbReference type="ChEBI" id="CHEBI:58210"/>
    </cofactor>
    <text evidence="1">Binds 1 FMN per subunit.</text>
</comment>
<comment type="pathway">
    <text evidence="1">Cofactor metabolism; pyridoxal 5'-phosphate salvage; pyridoxal 5'-phosphate from pyridoxamine 5'-phosphate: step 1/1.</text>
</comment>
<comment type="pathway">
    <text evidence="1">Cofactor metabolism; pyridoxal 5'-phosphate salvage; pyridoxal 5'-phosphate from pyridoxine 5'-phosphate: step 1/1.</text>
</comment>
<comment type="subunit">
    <text evidence="1">Homodimer.</text>
</comment>
<comment type="similarity">
    <text evidence="1">Belongs to the pyridoxamine 5'-phosphate oxidase family.</text>
</comment>
<proteinExistence type="inferred from homology"/>
<gene>
    <name evidence="1" type="primary">pdxH</name>
    <name type="ordered locus">Pmen_1436</name>
</gene>
<accession>A4XS85</accession>
<name>PDXH_ECTM1</name>
<sequence>MTQTLADMRRDYTRDGLSEAQAPLDPFTLFRQWFDDAVKTEQLPVEPNAMTLATVDEDGRPHCRVLLLKGLDERGFTFFSNYESAKGRQLAARPYAAMTFFWPSLERQVRIEGRVERVTPAESDGYFQVRPLGSRIGAWASPQSRVIRDRAELENLLAETEKRFLNQAPHCPPHWGGYRLLPERIEFWQGRPSRLHDRLDYRLQGEAWIRQRLAP</sequence>
<protein>
    <recommendedName>
        <fullName evidence="1">Pyridoxine/pyridoxamine 5'-phosphate oxidase</fullName>
        <ecNumber evidence="1">1.4.3.5</ecNumber>
    </recommendedName>
    <alternativeName>
        <fullName evidence="1">PNP/PMP oxidase</fullName>
        <shortName evidence="1">PNPOx</shortName>
    </alternativeName>
    <alternativeName>
        <fullName evidence="1">Pyridoxal 5'-phosphate synthase</fullName>
    </alternativeName>
</protein>
<reference key="1">
    <citation type="submission" date="2007-04" db="EMBL/GenBank/DDBJ databases">
        <title>Complete sequence of Pseudomonas mendocina ymp.</title>
        <authorList>
            <consortium name="US DOE Joint Genome Institute"/>
            <person name="Copeland A."/>
            <person name="Lucas S."/>
            <person name="Lapidus A."/>
            <person name="Barry K."/>
            <person name="Glavina del Rio T."/>
            <person name="Dalin E."/>
            <person name="Tice H."/>
            <person name="Pitluck S."/>
            <person name="Kiss H."/>
            <person name="Brettin T."/>
            <person name="Detter J.C."/>
            <person name="Bruce D."/>
            <person name="Han C."/>
            <person name="Schmutz J."/>
            <person name="Larimer F."/>
            <person name="Land M."/>
            <person name="Hauser L."/>
            <person name="Kyrpides N."/>
            <person name="Mikhailova N."/>
            <person name="Hersman L."/>
            <person name="Dubois J."/>
            <person name="Maurice P."/>
            <person name="Richardson P."/>
        </authorList>
    </citation>
    <scope>NUCLEOTIDE SEQUENCE [LARGE SCALE GENOMIC DNA]</scope>
    <source>
        <strain>ymp</strain>
    </source>
</reference>
<dbReference type="EC" id="1.4.3.5" evidence="1"/>
<dbReference type="EMBL" id="CP000680">
    <property type="protein sequence ID" value="ABP84201.1"/>
    <property type="molecule type" value="Genomic_DNA"/>
</dbReference>
<dbReference type="SMR" id="A4XS85"/>
<dbReference type="STRING" id="399739.Pmen_1436"/>
<dbReference type="KEGG" id="pmy:Pmen_1436"/>
<dbReference type="PATRIC" id="fig|399739.8.peg.1458"/>
<dbReference type="eggNOG" id="COG0259">
    <property type="taxonomic scope" value="Bacteria"/>
</dbReference>
<dbReference type="HOGENOM" id="CLU_032263_2_2_6"/>
<dbReference type="OrthoDB" id="9780392at2"/>
<dbReference type="UniPathway" id="UPA01068">
    <property type="reaction ID" value="UER00304"/>
</dbReference>
<dbReference type="UniPathway" id="UPA01068">
    <property type="reaction ID" value="UER00305"/>
</dbReference>
<dbReference type="GO" id="GO:0010181">
    <property type="term" value="F:FMN binding"/>
    <property type="evidence" value="ECO:0007669"/>
    <property type="project" value="UniProtKB-UniRule"/>
</dbReference>
<dbReference type="GO" id="GO:0004733">
    <property type="term" value="F:pyridoxamine phosphate oxidase activity"/>
    <property type="evidence" value="ECO:0007669"/>
    <property type="project" value="UniProtKB-UniRule"/>
</dbReference>
<dbReference type="GO" id="GO:0008615">
    <property type="term" value="P:pyridoxine biosynthetic process"/>
    <property type="evidence" value="ECO:0007669"/>
    <property type="project" value="UniProtKB-KW"/>
</dbReference>
<dbReference type="FunFam" id="2.30.110.10:FF:000011">
    <property type="entry name" value="Chromosome 7, whole genome shotgun sequence"/>
    <property type="match status" value="1"/>
</dbReference>
<dbReference type="Gene3D" id="2.30.110.10">
    <property type="entry name" value="Electron Transport, Fmn-binding Protein, Chain A"/>
    <property type="match status" value="1"/>
</dbReference>
<dbReference type="HAMAP" id="MF_01629">
    <property type="entry name" value="PdxH"/>
    <property type="match status" value="1"/>
</dbReference>
<dbReference type="InterPro" id="IPR000659">
    <property type="entry name" value="Pyridox_Oxase"/>
</dbReference>
<dbReference type="InterPro" id="IPR019740">
    <property type="entry name" value="Pyridox_Oxase_CS"/>
</dbReference>
<dbReference type="InterPro" id="IPR011576">
    <property type="entry name" value="Pyridox_Oxase_N"/>
</dbReference>
<dbReference type="InterPro" id="IPR019576">
    <property type="entry name" value="Pyridoxamine_oxidase_dimer_C"/>
</dbReference>
<dbReference type="InterPro" id="IPR012349">
    <property type="entry name" value="Split_barrel_FMN-bd"/>
</dbReference>
<dbReference type="NCBIfam" id="TIGR00558">
    <property type="entry name" value="pdxH"/>
    <property type="match status" value="1"/>
</dbReference>
<dbReference type="NCBIfam" id="NF004231">
    <property type="entry name" value="PRK05679.1"/>
    <property type="match status" value="1"/>
</dbReference>
<dbReference type="PANTHER" id="PTHR10851:SF0">
    <property type="entry name" value="PYRIDOXINE-5'-PHOSPHATE OXIDASE"/>
    <property type="match status" value="1"/>
</dbReference>
<dbReference type="PANTHER" id="PTHR10851">
    <property type="entry name" value="PYRIDOXINE-5-PHOSPHATE OXIDASE"/>
    <property type="match status" value="1"/>
</dbReference>
<dbReference type="Pfam" id="PF10590">
    <property type="entry name" value="PNP_phzG_C"/>
    <property type="match status" value="1"/>
</dbReference>
<dbReference type="Pfam" id="PF01243">
    <property type="entry name" value="PNPOx_N"/>
    <property type="match status" value="1"/>
</dbReference>
<dbReference type="PIRSF" id="PIRSF000190">
    <property type="entry name" value="Pyd_amn-ph_oxd"/>
    <property type="match status" value="1"/>
</dbReference>
<dbReference type="SUPFAM" id="SSF50475">
    <property type="entry name" value="FMN-binding split barrel"/>
    <property type="match status" value="1"/>
</dbReference>
<dbReference type="PROSITE" id="PS01064">
    <property type="entry name" value="PYRIDOX_OXIDASE"/>
    <property type="match status" value="1"/>
</dbReference>
<organism>
    <name type="scientific">Ectopseudomonas mendocina (strain ymp)</name>
    <name type="common">Pseudomonas mendocina</name>
    <dbReference type="NCBI Taxonomy" id="399739"/>
    <lineage>
        <taxon>Bacteria</taxon>
        <taxon>Pseudomonadati</taxon>
        <taxon>Pseudomonadota</taxon>
        <taxon>Gammaproteobacteria</taxon>
        <taxon>Pseudomonadales</taxon>
        <taxon>Pseudomonadaceae</taxon>
        <taxon>Ectopseudomonas</taxon>
    </lineage>
</organism>
<feature type="chain" id="PRO_1000069698" description="Pyridoxine/pyridoxamine 5'-phosphate oxidase">
    <location>
        <begin position="1"/>
        <end position="215"/>
    </location>
</feature>
<feature type="binding site" evidence="1">
    <location>
        <begin position="9"/>
        <end position="12"/>
    </location>
    <ligand>
        <name>substrate</name>
    </ligand>
</feature>
<feature type="binding site" evidence="1">
    <location>
        <begin position="64"/>
        <end position="69"/>
    </location>
    <ligand>
        <name>FMN</name>
        <dbReference type="ChEBI" id="CHEBI:58210"/>
    </ligand>
</feature>
<feature type="binding site" evidence="1">
    <location>
        <position position="69"/>
    </location>
    <ligand>
        <name>substrate</name>
    </ligand>
</feature>
<feature type="binding site" evidence="1">
    <location>
        <begin position="79"/>
        <end position="80"/>
    </location>
    <ligand>
        <name>FMN</name>
        <dbReference type="ChEBI" id="CHEBI:58210"/>
    </ligand>
</feature>
<feature type="binding site" evidence="1">
    <location>
        <position position="86"/>
    </location>
    <ligand>
        <name>FMN</name>
        <dbReference type="ChEBI" id="CHEBI:58210"/>
    </ligand>
</feature>
<feature type="binding site" evidence="1">
    <location>
        <position position="108"/>
    </location>
    <ligand>
        <name>FMN</name>
        <dbReference type="ChEBI" id="CHEBI:58210"/>
    </ligand>
</feature>
<feature type="binding site" evidence="1">
    <location>
        <position position="126"/>
    </location>
    <ligand>
        <name>substrate</name>
    </ligand>
</feature>
<feature type="binding site" evidence="1">
    <location>
        <position position="130"/>
    </location>
    <ligand>
        <name>substrate</name>
    </ligand>
</feature>
<feature type="binding site" evidence="1">
    <location>
        <position position="134"/>
    </location>
    <ligand>
        <name>substrate</name>
    </ligand>
</feature>
<feature type="binding site" evidence="1">
    <location>
        <begin position="143"/>
        <end position="144"/>
    </location>
    <ligand>
        <name>FMN</name>
        <dbReference type="ChEBI" id="CHEBI:58210"/>
    </ligand>
</feature>
<feature type="binding site" evidence="1">
    <location>
        <position position="188"/>
    </location>
    <ligand>
        <name>FMN</name>
        <dbReference type="ChEBI" id="CHEBI:58210"/>
    </ligand>
</feature>
<feature type="binding site" evidence="1">
    <location>
        <begin position="194"/>
        <end position="196"/>
    </location>
    <ligand>
        <name>substrate</name>
    </ligand>
</feature>
<feature type="binding site" evidence="1">
    <location>
        <position position="198"/>
    </location>
    <ligand>
        <name>FMN</name>
        <dbReference type="ChEBI" id="CHEBI:58210"/>
    </ligand>
</feature>
<evidence type="ECO:0000255" key="1">
    <source>
        <dbReference type="HAMAP-Rule" id="MF_01629"/>
    </source>
</evidence>
<keyword id="KW-0285">Flavoprotein</keyword>
<keyword id="KW-0288">FMN</keyword>
<keyword id="KW-0560">Oxidoreductase</keyword>
<keyword id="KW-0664">Pyridoxine biosynthesis</keyword>